<protein>
    <recommendedName>
        <fullName evidence="1">SsrA-binding protein</fullName>
    </recommendedName>
    <alternativeName>
        <fullName evidence="1">Small protein B</fullName>
    </alternativeName>
</protein>
<comment type="function">
    <text evidence="1">Required for rescue of stalled ribosomes mediated by trans-translation. Binds to transfer-messenger RNA (tmRNA), required for stable association of tmRNA with ribosomes. tmRNA and SmpB together mimic tRNA shape, replacing the anticodon stem-loop with SmpB. tmRNA is encoded by the ssrA gene; the 2 termini fold to resemble tRNA(Ala) and it encodes a 'tag peptide', a short internal open reading frame. During trans-translation Ala-aminoacylated tmRNA acts like a tRNA, entering the A-site of stalled ribosomes, displacing the stalled mRNA. The ribosome then switches to translate the ORF on the tmRNA; the nascent peptide is terminated with the 'tag peptide' encoded by the tmRNA and targeted for degradation. The ribosome is freed to recommence translation, which seems to be the essential function of trans-translation.</text>
</comment>
<comment type="subcellular location">
    <subcellularLocation>
        <location evidence="1">Cytoplasm</location>
    </subcellularLocation>
    <text evidence="1">The tmRNA-SmpB complex associates with stalled 70S ribosomes.</text>
</comment>
<comment type="similarity">
    <text evidence="1">Belongs to the SmpB family.</text>
</comment>
<dbReference type="EMBL" id="CP000410">
    <property type="protein sequence ID" value="ABJ54746.1"/>
    <property type="molecule type" value="Genomic_DNA"/>
</dbReference>
<dbReference type="RefSeq" id="WP_001051750.1">
    <property type="nucleotide sequence ID" value="NZ_JAMLJR010000004.1"/>
</dbReference>
<dbReference type="SMR" id="Q04KV3"/>
<dbReference type="PaxDb" id="373153-SPD_0863"/>
<dbReference type="GeneID" id="93739761"/>
<dbReference type="KEGG" id="spd:SPD_0863"/>
<dbReference type="eggNOG" id="COG0691">
    <property type="taxonomic scope" value="Bacteria"/>
</dbReference>
<dbReference type="HOGENOM" id="CLU_108953_0_0_9"/>
<dbReference type="BioCyc" id="SPNE373153:G1G6V-947-MONOMER"/>
<dbReference type="Proteomes" id="UP000001452">
    <property type="component" value="Chromosome"/>
</dbReference>
<dbReference type="GO" id="GO:0005829">
    <property type="term" value="C:cytosol"/>
    <property type="evidence" value="ECO:0007669"/>
    <property type="project" value="TreeGrafter"/>
</dbReference>
<dbReference type="GO" id="GO:0003723">
    <property type="term" value="F:RNA binding"/>
    <property type="evidence" value="ECO:0007669"/>
    <property type="project" value="UniProtKB-UniRule"/>
</dbReference>
<dbReference type="GO" id="GO:0070929">
    <property type="term" value="P:trans-translation"/>
    <property type="evidence" value="ECO:0007669"/>
    <property type="project" value="UniProtKB-UniRule"/>
</dbReference>
<dbReference type="CDD" id="cd09294">
    <property type="entry name" value="SmpB"/>
    <property type="match status" value="1"/>
</dbReference>
<dbReference type="Gene3D" id="2.40.280.10">
    <property type="match status" value="1"/>
</dbReference>
<dbReference type="HAMAP" id="MF_00023">
    <property type="entry name" value="SmpB"/>
    <property type="match status" value="1"/>
</dbReference>
<dbReference type="InterPro" id="IPR023620">
    <property type="entry name" value="SmpB"/>
</dbReference>
<dbReference type="InterPro" id="IPR000037">
    <property type="entry name" value="SsrA-bd_prot"/>
</dbReference>
<dbReference type="InterPro" id="IPR020081">
    <property type="entry name" value="SsrA-bd_prot_CS"/>
</dbReference>
<dbReference type="NCBIfam" id="NF003843">
    <property type="entry name" value="PRK05422.1"/>
    <property type="match status" value="1"/>
</dbReference>
<dbReference type="NCBIfam" id="TIGR00086">
    <property type="entry name" value="smpB"/>
    <property type="match status" value="1"/>
</dbReference>
<dbReference type="PANTHER" id="PTHR30308:SF2">
    <property type="entry name" value="SSRA-BINDING PROTEIN"/>
    <property type="match status" value="1"/>
</dbReference>
<dbReference type="PANTHER" id="PTHR30308">
    <property type="entry name" value="TMRNA-BINDING COMPONENT OF TRANS-TRANSLATION TAGGING COMPLEX"/>
    <property type="match status" value="1"/>
</dbReference>
<dbReference type="Pfam" id="PF01668">
    <property type="entry name" value="SmpB"/>
    <property type="match status" value="1"/>
</dbReference>
<dbReference type="SUPFAM" id="SSF74982">
    <property type="entry name" value="Small protein B (SmpB)"/>
    <property type="match status" value="1"/>
</dbReference>
<dbReference type="PROSITE" id="PS01317">
    <property type="entry name" value="SSRP"/>
    <property type="match status" value="1"/>
</dbReference>
<keyword id="KW-0963">Cytoplasm</keyword>
<keyword id="KW-1185">Reference proteome</keyword>
<keyword id="KW-0694">RNA-binding</keyword>
<evidence type="ECO:0000255" key="1">
    <source>
        <dbReference type="HAMAP-Rule" id="MF_00023"/>
    </source>
</evidence>
<name>SSRP_STRP2</name>
<accession>Q04KV3</accession>
<sequence>MAKGEGKVVAQNKKARHDYTIVDTLEAGMVLTGTEIKSVRAARINLKDGFAQVKNGEVWLSNVHIAPYEEGNIWNQEPERRRKLLLHKKQIQKLEQETKGTGMTLVPLKVYIKDGYAKLLLGLAKGKHDYDKRESIKRREQNRDIARVMKAVNQR</sequence>
<feature type="chain" id="PRO_1000002162" description="SsrA-binding protein">
    <location>
        <begin position="1"/>
        <end position="155"/>
    </location>
</feature>
<proteinExistence type="inferred from homology"/>
<gene>
    <name evidence="1" type="primary">smpB</name>
    <name type="ordered locus">SPD_0863</name>
</gene>
<organism>
    <name type="scientific">Streptococcus pneumoniae serotype 2 (strain D39 / NCTC 7466)</name>
    <dbReference type="NCBI Taxonomy" id="373153"/>
    <lineage>
        <taxon>Bacteria</taxon>
        <taxon>Bacillati</taxon>
        <taxon>Bacillota</taxon>
        <taxon>Bacilli</taxon>
        <taxon>Lactobacillales</taxon>
        <taxon>Streptococcaceae</taxon>
        <taxon>Streptococcus</taxon>
    </lineage>
</organism>
<reference key="1">
    <citation type="journal article" date="2007" name="J. Bacteriol.">
        <title>Genome sequence of Avery's virulent serotype 2 strain D39 of Streptococcus pneumoniae and comparison with that of unencapsulated laboratory strain R6.</title>
        <authorList>
            <person name="Lanie J.A."/>
            <person name="Ng W.-L."/>
            <person name="Kazmierczak K.M."/>
            <person name="Andrzejewski T.M."/>
            <person name="Davidsen T.M."/>
            <person name="Wayne K.J."/>
            <person name="Tettelin H."/>
            <person name="Glass J.I."/>
            <person name="Winkler M.E."/>
        </authorList>
    </citation>
    <scope>NUCLEOTIDE SEQUENCE [LARGE SCALE GENOMIC DNA]</scope>
    <source>
        <strain>D39 / NCTC 7466</strain>
    </source>
</reference>